<organism>
    <name type="scientific">Geobacter sulfurreducens (strain ATCC 51573 / DSM 12127 / PCA)</name>
    <dbReference type="NCBI Taxonomy" id="243231"/>
    <lineage>
        <taxon>Bacteria</taxon>
        <taxon>Pseudomonadati</taxon>
        <taxon>Thermodesulfobacteriota</taxon>
        <taxon>Desulfuromonadia</taxon>
        <taxon>Geobacterales</taxon>
        <taxon>Geobacteraceae</taxon>
        <taxon>Geobacter</taxon>
    </lineage>
</organism>
<dbReference type="EC" id="4.6.1.17" evidence="1"/>
<dbReference type="EMBL" id="AE017180">
    <property type="protein sequence ID" value="AAR36076.1"/>
    <property type="molecule type" value="Genomic_DNA"/>
</dbReference>
<dbReference type="RefSeq" id="NP_953749.1">
    <property type="nucleotide sequence ID" value="NC_002939.5"/>
</dbReference>
<dbReference type="RefSeq" id="WP_010943342.1">
    <property type="nucleotide sequence ID" value="NC_002939.5"/>
</dbReference>
<dbReference type="SMR" id="Q749N8"/>
<dbReference type="FunCoup" id="Q749N8">
    <property type="interactions" value="354"/>
</dbReference>
<dbReference type="STRING" id="243231.GSU2704"/>
<dbReference type="EnsemblBacteria" id="AAR36076">
    <property type="protein sequence ID" value="AAR36076"/>
    <property type="gene ID" value="GSU2704"/>
</dbReference>
<dbReference type="KEGG" id="gsu:GSU2704"/>
<dbReference type="PATRIC" id="fig|243231.5.peg.2734"/>
<dbReference type="eggNOG" id="COG0315">
    <property type="taxonomic scope" value="Bacteria"/>
</dbReference>
<dbReference type="HOGENOM" id="CLU_074693_1_0_7"/>
<dbReference type="InParanoid" id="Q749N8"/>
<dbReference type="OrthoDB" id="9794429at2"/>
<dbReference type="UniPathway" id="UPA00344"/>
<dbReference type="Proteomes" id="UP000000577">
    <property type="component" value="Chromosome"/>
</dbReference>
<dbReference type="GO" id="GO:0061799">
    <property type="term" value="F:cyclic pyranopterin monophosphate synthase activity"/>
    <property type="evidence" value="ECO:0007669"/>
    <property type="project" value="UniProtKB-UniRule"/>
</dbReference>
<dbReference type="GO" id="GO:0006777">
    <property type="term" value="P:Mo-molybdopterin cofactor biosynthetic process"/>
    <property type="evidence" value="ECO:0007669"/>
    <property type="project" value="UniProtKB-UniRule"/>
</dbReference>
<dbReference type="CDD" id="cd01420">
    <property type="entry name" value="MoaC_PE"/>
    <property type="match status" value="1"/>
</dbReference>
<dbReference type="Gene3D" id="3.30.70.640">
    <property type="entry name" value="Molybdopterin cofactor biosynthesis C (MoaC) domain"/>
    <property type="match status" value="1"/>
</dbReference>
<dbReference type="HAMAP" id="MF_01224_B">
    <property type="entry name" value="MoaC_B"/>
    <property type="match status" value="1"/>
</dbReference>
<dbReference type="InterPro" id="IPR023045">
    <property type="entry name" value="MoaC"/>
</dbReference>
<dbReference type="InterPro" id="IPR047594">
    <property type="entry name" value="MoaC_bact/euk"/>
</dbReference>
<dbReference type="InterPro" id="IPR036522">
    <property type="entry name" value="MoaC_sf"/>
</dbReference>
<dbReference type="InterPro" id="IPR050105">
    <property type="entry name" value="MoCo_biosynth_MoaA/MoaC"/>
</dbReference>
<dbReference type="InterPro" id="IPR002820">
    <property type="entry name" value="Mopterin_CF_biosynth-C_dom"/>
</dbReference>
<dbReference type="NCBIfam" id="TIGR00581">
    <property type="entry name" value="moaC"/>
    <property type="match status" value="1"/>
</dbReference>
<dbReference type="NCBIfam" id="NF006870">
    <property type="entry name" value="PRK09364.1"/>
    <property type="match status" value="1"/>
</dbReference>
<dbReference type="PANTHER" id="PTHR22960:SF29">
    <property type="entry name" value="CYCLIC PYRANOPTERIN MONOPHOSPHATE SYNTHASE"/>
    <property type="match status" value="1"/>
</dbReference>
<dbReference type="PANTHER" id="PTHR22960">
    <property type="entry name" value="MOLYBDOPTERIN COFACTOR SYNTHESIS PROTEIN A"/>
    <property type="match status" value="1"/>
</dbReference>
<dbReference type="Pfam" id="PF01967">
    <property type="entry name" value="MoaC"/>
    <property type="match status" value="1"/>
</dbReference>
<dbReference type="SUPFAM" id="SSF55040">
    <property type="entry name" value="Molybdenum cofactor biosynthesis protein C, MoaC"/>
    <property type="match status" value="1"/>
</dbReference>
<feature type="chain" id="PRO_1000085674" description="Cyclic pyranopterin monophosphate synthase">
    <location>
        <begin position="1"/>
        <end position="160"/>
    </location>
</feature>
<feature type="active site" evidence="1">
    <location>
        <position position="127"/>
    </location>
</feature>
<feature type="binding site" evidence="1">
    <location>
        <begin position="74"/>
        <end position="76"/>
    </location>
    <ligand>
        <name>substrate</name>
    </ligand>
</feature>
<feature type="binding site" evidence="1">
    <location>
        <begin position="112"/>
        <end position="113"/>
    </location>
    <ligand>
        <name>substrate</name>
    </ligand>
</feature>
<accession>Q749N8</accession>
<keyword id="KW-0456">Lyase</keyword>
<keyword id="KW-0501">Molybdenum cofactor biosynthesis</keyword>
<keyword id="KW-1185">Reference proteome</keyword>
<proteinExistence type="inferred from homology"/>
<name>MOAC_GEOSL</name>
<gene>
    <name evidence="1" type="primary">moaC</name>
    <name type="ordered locus">GSU2704</name>
</gene>
<comment type="function">
    <text evidence="1">Catalyzes the conversion of (8S)-3',8-cyclo-7,8-dihydroguanosine 5'-triphosphate to cyclic pyranopterin monophosphate (cPMP).</text>
</comment>
<comment type="catalytic activity">
    <reaction evidence="1">
        <text>(8S)-3',8-cyclo-7,8-dihydroguanosine 5'-triphosphate = cyclic pyranopterin phosphate + diphosphate</text>
        <dbReference type="Rhea" id="RHEA:49580"/>
        <dbReference type="ChEBI" id="CHEBI:33019"/>
        <dbReference type="ChEBI" id="CHEBI:59648"/>
        <dbReference type="ChEBI" id="CHEBI:131766"/>
        <dbReference type="EC" id="4.6.1.17"/>
    </reaction>
</comment>
<comment type="pathway">
    <text evidence="1">Cofactor biosynthesis; molybdopterin biosynthesis.</text>
</comment>
<comment type="subunit">
    <text evidence="1">Homohexamer; trimer of dimers.</text>
</comment>
<comment type="similarity">
    <text evidence="1">Belongs to the MoaC family.</text>
</comment>
<reference key="1">
    <citation type="journal article" date="2003" name="Science">
        <title>Genome of Geobacter sulfurreducens: metal reduction in subsurface environments.</title>
        <authorList>
            <person name="Methe B.A."/>
            <person name="Nelson K.E."/>
            <person name="Eisen J.A."/>
            <person name="Paulsen I.T."/>
            <person name="Nelson W.C."/>
            <person name="Heidelberg J.F."/>
            <person name="Wu D."/>
            <person name="Wu M."/>
            <person name="Ward N.L."/>
            <person name="Beanan M.J."/>
            <person name="Dodson R.J."/>
            <person name="Madupu R."/>
            <person name="Brinkac L.M."/>
            <person name="Daugherty S.C."/>
            <person name="DeBoy R.T."/>
            <person name="Durkin A.S."/>
            <person name="Gwinn M.L."/>
            <person name="Kolonay J.F."/>
            <person name="Sullivan S.A."/>
            <person name="Haft D.H."/>
            <person name="Selengut J."/>
            <person name="Davidsen T.M."/>
            <person name="Zafar N."/>
            <person name="White O."/>
            <person name="Tran B."/>
            <person name="Romero C."/>
            <person name="Forberger H.A."/>
            <person name="Weidman J.F."/>
            <person name="Khouri H.M."/>
            <person name="Feldblyum T.V."/>
            <person name="Utterback T.R."/>
            <person name="Van Aken S.E."/>
            <person name="Lovley D.R."/>
            <person name="Fraser C.M."/>
        </authorList>
    </citation>
    <scope>NUCLEOTIDE SEQUENCE [LARGE SCALE GENOMIC DNA]</scope>
    <source>
        <strain>ATCC 51573 / DSM 12127 / PCA</strain>
    </source>
</reference>
<protein>
    <recommendedName>
        <fullName evidence="1">Cyclic pyranopterin monophosphate synthase</fullName>
        <ecNumber evidence="1">4.6.1.17</ecNumber>
    </recommendedName>
    <alternativeName>
        <fullName evidence="1">Molybdenum cofactor biosynthesis protein C</fullName>
    </alternativeName>
</protein>
<evidence type="ECO:0000255" key="1">
    <source>
        <dbReference type="HAMAP-Rule" id="MF_01224"/>
    </source>
</evidence>
<sequence>MSFNHFDDQGRAIMVDVSGKQPTLRTATAAATVSMQPDTLADLLAGRTTKGDVLGVARIAGIAAAKKTPELIPLSHPLAIHHAAIDFDTDQACGTVTVRATVRAFERTGVEMEAMTSAAVAALTIYDMCKGADKGITIGQIRLLFKEGGKSGTWQREEGQ</sequence>